<organism>
    <name type="scientific">Bacillus licheniformis (strain ATCC 14580 / DSM 13 / JCM 2505 / CCUG 7422 / NBRC 12200 / NCIMB 9375 / NCTC 10341 / NRRL NRS-1264 / Gibson 46)</name>
    <dbReference type="NCBI Taxonomy" id="279010"/>
    <lineage>
        <taxon>Bacteria</taxon>
        <taxon>Bacillati</taxon>
        <taxon>Bacillota</taxon>
        <taxon>Bacilli</taxon>
        <taxon>Bacillales</taxon>
        <taxon>Bacillaceae</taxon>
        <taxon>Bacillus</taxon>
    </lineage>
</organism>
<feature type="chain" id="PRO_0000121788" description="tRNA pseudouridine synthase B">
    <location>
        <begin position="1"/>
        <end position="309"/>
    </location>
</feature>
<feature type="active site" description="Nucleophile" evidence="1">
    <location>
        <position position="39"/>
    </location>
</feature>
<keyword id="KW-0413">Isomerase</keyword>
<keyword id="KW-1185">Reference proteome</keyword>
<keyword id="KW-0819">tRNA processing</keyword>
<comment type="function">
    <text evidence="1">Responsible for synthesis of pseudouridine from uracil-55 in the psi GC loop of transfer RNAs.</text>
</comment>
<comment type="catalytic activity">
    <reaction evidence="1">
        <text>uridine(55) in tRNA = pseudouridine(55) in tRNA</text>
        <dbReference type="Rhea" id="RHEA:42532"/>
        <dbReference type="Rhea" id="RHEA-COMP:10101"/>
        <dbReference type="Rhea" id="RHEA-COMP:10102"/>
        <dbReference type="ChEBI" id="CHEBI:65314"/>
        <dbReference type="ChEBI" id="CHEBI:65315"/>
        <dbReference type="EC" id="5.4.99.25"/>
    </reaction>
</comment>
<comment type="similarity">
    <text evidence="1">Belongs to the pseudouridine synthase TruB family. Type 1 subfamily.</text>
</comment>
<proteinExistence type="inferred from homology"/>
<accession>Q65JH8</accession>
<accession>Q62UY3</accession>
<reference key="1">
    <citation type="journal article" date="2004" name="J. Mol. Microbiol. Biotechnol.">
        <title>The complete genome sequence of Bacillus licheniformis DSM13, an organism with great industrial potential.</title>
        <authorList>
            <person name="Veith B."/>
            <person name="Herzberg C."/>
            <person name="Steckel S."/>
            <person name="Feesche J."/>
            <person name="Maurer K.H."/>
            <person name="Ehrenreich P."/>
            <person name="Baeumer S."/>
            <person name="Henne A."/>
            <person name="Liesegang H."/>
            <person name="Merkl R."/>
            <person name="Ehrenreich A."/>
            <person name="Gottschalk G."/>
        </authorList>
    </citation>
    <scope>NUCLEOTIDE SEQUENCE [LARGE SCALE GENOMIC DNA]</scope>
    <source>
        <strain>ATCC 14580 / DSM 13 / JCM 2505 / CCUG 7422 / NBRC 12200 / NCIMB 9375 / NCTC 10341 / NRRL NRS-1264 / Gibson 46</strain>
    </source>
</reference>
<reference key="2">
    <citation type="journal article" date="2004" name="Genome Biol.">
        <title>Complete genome sequence of the industrial bacterium Bacillus licheniformis and comparisons with closely related Bacillus species.</title>
        <authorList>
            <person name="Rey M.W."/>
            <person name="Ramaiya P."/>
            <person name="Nelson B.A."/>
            <person name="Brody-Karpin S.D."/>
            <person name="Zaretsky E.J."/>
            <person name="Tang M."/>
            <person name="Lopez de Leon A."/>
            <person name="Xiang H."/>
            <person name="Gusti V."/>
            <person name="Clausen I.G."/>
            <person name="Olsen P.B."/>
            <person name="Rasmussen M.D."/>
            <person name="Andersen J.T."/>
            <person name="Joergensen P.L."/>
            <person name="Larsen T.S."/>
            <person name="Sorokin A."/>
            <person name="Bolotin A."/>
            <person name="Lapidus A."/>
            <person name="Galleron N."/>
            <person name="Ehrlich S.D."/>
            <person name="Berka R.M."/>
        </authorList>
    </citation>
    <scope>NUCLEOTIDE SEQUENCE [LARGE SCALE GENOMIC DNA]</scope>
    <source>
        <strain>ATCC 14580 / DSM 13 / JCM 2505 / CCUG 7422 / NBRC 12200 / NCIMB 9375 / NCTC 10341 / NRRL NRS-1264 / Gibson 46</strain>
    </source>
</reference>
<reference key="3">
    <citation type="submission" date="2007-04" db="EMBL/GenBank/DDBJ databases">
        <authorList>
            <person name="Berka R.M."/>
            <person name="Rey M.W."/>
            <person name="Ramaiya P."/>
        </authorList>
    </citation>
    <scope>SEQUENCE REVISION TO 303</scope>
</reference>
<gene>
    <name evidence="1" type="primary">truB</name>
    <name type="ordered locus">BLi01891</name>
    <name type="ordered locus">BL01222</name>
</gene>
<sequence length="309" mass="34016">MYNGVLLLHKPVGMTSHDCVMKIRKLLKTKKVGHTGTLDPEVSGVLPICVGRATKIVEYLTEKSKTYDAEVTLGCSTETEDQTGEVTEKKPVLAPPDEQTVQSVLRSLEGTIEQVPPMYSAVKVGGKKLYEYARAGIEVERPKRTITIHHIELTSEIRHEGDKARFRFVVTCSKGTYVRTLAVTIGEKLGYPAHMSNLVRTASGPFTLDECLTFEDVEGLIADGTLSEKLVPIERALDHLPKWIISDTLAKKVENGAVLETPGSFSHLTSEDRIAVFTEAGRCTAVYYPHPTKTGLLKPAKVLVQKSEQ</sequence>
<dbReference type="EC" id="5.4.99.25" evidence="1"/>
<dbReference type="EMBL" id="AE017333">
    <property type="protein sequence ID" value="AAU40786.1"/>
    <property type="molecule type" value="Genomic_DNA"/>
</dbReference>
<dbReference type="EMBL" id="CP000002">
    <property type="protein sequence ID" value="AAU23426.2"/>
    <property type="molecule type" value="Genomic_DNA"/>
</dbReference>
<dbReference type="RefSeq" id="WP_003181875.1">
    <property type="nucleotide sequence ID" value="NC_006322.1"/>
</dbReference>
<dbReference type="SMR" id="Q65JH8"/>
<dbReference type="STRING" id="279010.BL01222"/>
<dbReference type="GeneID" id="92861516"/>
<dbReference type="KEGG" id="bld:BLi01891"/>
<dbReference type="KEGG" id="bli:BL01222"/>
<dbReference type="eggNOG" id="COG0130">
    <property type="taxonomic scope" value="Bacteria"/>
</dbReference>
<dbReference type="HOGENOM" id="CLU_032087_0_1_9"/>
<dbReference type="Proteomes" id="UP000000606">
    <property type="component" value="Chromosome"/>
</dbReference>
<dbReference type="GO" id="GO:0003723">
    <property type="term" value="F:RNA binding"/>
    <property type="evidence" value="ECO:0007669"/>
    <property type="project" value="InterPro"/>
</dbReference>
<dbReference type="GO" id="GO:0160148">
    <property type="term" value="F:tRNA pseudouridine(55) synthase activity"/>
    <property type="evidence" value="ECO:0007669"/>
    <property type="project" value="UniProtKB-EC"/>
</dbReference>
<dbReference type="GO" id="GO:1990481">
    <property type="term" value="P:mRNA pseudouridine synthesis"/>
    <property type="evidence" value="ECO:0007669"/>
    <property type="project" value="TreeGrafter"/>
</dbReference>
<dbReference type="GO" id="GO:0031119">
    <property type="term" value="P:tRNA pseudouridine synthesis"/>
    <property type="evidence" value="ECO:0007669"/>
    <property type="project" value="UniProtKB-UniRule"/>
</dbReference>
<dbReference type="CDD" id="cd02573">
    <property type="entry name" value="PseudoU_synth_EcTruB"/>
    <property type="match status" value="1"/>
</dbReference>
<dbReference type="FunFam" id="3.30.2350.10:FF:000011">
    <property type="entry name" value="tRNA pseudouridine synthase B"/>
    <property type="match status" value="1"/>
</dbReference>
<dbReference type="Gene3D" id="3.30.2350.10">
    <property type="entry name" value="Pseudouridine synthase"/>
    <property type="match status" value="1"/>
</dbReference>
<dbReference type="HAMAP" id="MF_01080">
    <property type="entry name" value="TruB_bact"/>
    <property type="match status" value="1"/>
</dbReference>
<dbReference type="InterPro" id="IPR020103">
    <property type="entry name" value="PsdUridine_synth_cat_dom_sf"/>
</dbReference>
<dbReference type="InterPro" id="IPR002501">
    <property type="entry name" value="PsdUridine_synth_N"/>
</dbReference>
<dbReference type="InterPro" id="IPR014780">
    <property type="entry name" value="tRNA_psdUridine_synth_TruB"/>
</dbReference>
<dbReference type="InterPro" id="IPR032819">
    <property type="entry name" value="TruB_C"/>
</dbReference>
<dbReference type="NCBIfam" id="TIGR00431">
    <property type="entry name" value="TruB"/>
    <property type="match status" value="1"/>
</dbReference>
<dbReference type="PANTHER" id="PTHR13767:SF2">
    <property type="entry name" value="PSEUDOURIDYLATE SYNTHASE TRUB1"/>
    <property type="match status" value="1"/>
</dbReference>
<dbReference type="PANTHER" id="PTHR13767">
    <property type="entry name" value="TRNA-PSEUDOURIDINE SYNTHASE"/>
    <property type="match status" value="1"/>
</dbReference>
<dbReference type="Pfam" id="PF16198">
    <property type="entry name" value="TruB_C_2"/>
    <property type="match status" value="1"/>
</dbReference>
<dbReference type="Pfam" id="PF01509">
    <property type="entry name" value="TruB_N"/>
    <property type="match status" value="1"/>
</dbReference>
<dbReference type="SUPFAM" id="SSF55120">
    <property type="entry name" value="Pseudouridine synthase"/>
    <property type="match status" value="1"/>
</dbReference>
<name>TRUB_BACLD</name>
<evidence type="ECO:0000255" key="1">
    <source>
        <dbReference type="HAMAP-Rule" id="MF_01080"/>
    </source>
</evidence>
<protein>
    <recommendedName>
        <fullName evidence="1">tRNA pseudouridine synthase B</fullName>
        <ecNumber evidence="1">5.4.99.25</ecNumber>
    </recommendedName>
    <alternativeName>
        <fullName evidence="1">tRNA pseudouridine(55) synthase</fullName>
        <shortName evidence="1">Psi55 synthase</shortName>
    </alternativeName>
    <alternativeName>
        <fullName evidence="1">tRNA pseudouridylate synthase</fullName>
    </alternativeName>
    <alternativeName>
        <fullName evidence="1">tRNA-uridine isomerase</fullName>
    </alternativeName>
</protein>